<accession>B7JI46</accession>
<organism>
    <name type="scientific">Bacillus cereus (strain AH820)</name>
    <dbReference type="NCBI Taxonomy" id="405535"/>
    <lineage>
        <taxon>Bacteria</taxon>
        <taxon>Bacillati</taxon>
        <taxon>Bacillota</taxon>
        <taxon>Bacilli</taxon>
        <taxon>Bacillales</taxon>
        <taxon>Bacillaceae</taxon>
        <taxon>Bacillus</taxon>
        <taxon>Bacillus cereus group</taxon>
    </lineage>
</organism>
<name>SSPO_BACC0</name>
<dbReference type="EMBL" id="CP001283">
    <property type="protein sequence ID" value="ACK92229.1"/>
    <property type="molecule type" value="Genomic_DNA"/>
</dbReference>
<dbReference type="RefSeq" id="WP_000518052.1">
    <property type="nucleotide sequence ID" value="NC_011773.1"/>
</dbReference>
<dbReference type="GeneID" id="93007567"/>
<dbReference type="KEGG" id="bcu:BCAH820_3628"/>
<dbReference type="HOGENOM" id="CLU_206342_0_0_9"/>
<dbReference type="Proteomes" id="UP000001363">
    <property type="component" value="Chromosome"/>
</dbReference>
<dbReference type="GO" id="GO:0042601">
    <property type="term" value="C:endospore-forming forespore"/>
    <property type="evidence" value="ECO:0007669"/>
    <property type="project" value="InterPro"/>
</dbReference>
<dbReference type="GO" id="GO:0030436">
    <property type="term" value="P:asexual sporulation"/>
    <property type="evidence" value="ECO:0007669"/>
    <property type="project" value="UniProtKB-UniRule"/>
</dbReference>
<dbReference type="GO" id="GO:0030435">
    <property type="term" value="P:sporulation resulting in formation of a cellular spore"/>
    <property type="evidence" value="ECO:0007669"/>
    <property type="project" value="UniProtKB-KW"/>
</dbReference>
<dbReference type="HAMAP" id="MF_00665">
    <property type="entry name" value="SspO"/>
    <property type="match status" value="1"/>
</dbReference>
<dbReference type="InterPro" id="IPR012613">
    <property type="entry name" value="SASP_SspO"/>
</dbReference>
<dbReference type="NCBIfam" id="TIGR02864">
    <property type="entry name" value="spore_sspO"/>
    <property type="match status" value="1"/>
</dbReference>
<dbReference type="Pfam" id="PF08175">
    <property type="entry name" value="SspO"/>
    <property type="match status" value="1"/>
</dbReference>
<feature type="chain" id="PRO_1000131497" description="Small, acid-soluble spore protein O">
    <location>
        <begin position="1"/>
        <end position="49"/>
    </location>
</feature>
<feature type="region of interest" description="Disordered" evidence="2">
    <location>
        <begin position="1"/>
        <end position="49"/>
    </location>
</feature>
<feature type="compositionally biased region" description="Polar residues" evidence="2">
    <location>
        <begin position="8"/>
        <end position="20"/>
    </location>
</feature>
<sequence length="49" mass="5390">MGKRKANHTISGMNAASAQGQGAGYNEEFANENLTPAERQNNKKRKKNQ</sequence>
<proteinExistence type="inferred from homology"/>
<evidence type="ECO:0000255" key="1">
    <source>
        <dbReference type="HAMAP-Rule" id="MF_00665"/>
    </source>
</evidence>
<evidence type="ECO:0000256" key="2">
    <source>
        <dbReference type="SAM" id="MobiDB-lite"/>
    </source>
</evidence>
<reference key="1">
    <citation type="submission" date="2008-10" db="EMBL/GenBank/DDBJ databases">
        <title>Genome sequence of Bacillus cereus AH820.</title>
        <authorList>
            <person name="Dodson R.J."/>
            <person name="Durkin A.S."/>
            <person name="Rosovitz M.J."/>
            <person name="Rasko D.A."/>
            <person name="Hoffmaster A."/>
            <person name="Ravel J."/>
            <person name="Sutton G."/>
        </authorList>
    </citation>
    <scope>NUCLEOTIDE SEQUENCE [LARGE SCALE GENOMIC DNA]</scope>
    <source>
        <strain>AH820</strain>
    </source>
</reference>
<gene>
    <name evidence="1" type="primary">sspO</name>
    <name type="ordered locus">BCAH820_3628</name>
</gene>
<keyword id="KW-0749">Sporulation</keyword>
<comment type="subcellular location">
    <subcellularLocation>
        <location evidence="1">Spore core</location>
    </subcellularLocation>
</comment>
<comment type="induction">
    <text evidence="1">Expressed only in the forespore compartment of sporulating cells.</text>
</comment>
<comment type="similarity">
    <text evidence="1">Belongs to the SspO family.</text>
</comment>
<protein>
    <recommendedName>
        <fullName evidence="1">Small, acid-soluble spore protein O</fullName>
        <shortName evidence="1">SASP O</shortName>
    </recommendedName>
</protein>